<accession>B5FCB8</accession>
<proteinExistence type="inferred from homology"/>
<feature type="chain" id="PRO_1000190112" description="Thiosulfate sulfurtransferase GlpE">
    <location>
        <begin position="1"/>
        <end position="107"/>
    </location>
</feature>
<feature type="domain" description="Rhodanese" evidence="1">
    <location>
        <begin position="19"/>
        <end position="107"/>
    </location>
</feature>
<feature type="active site" description="Cysteine persulfide intermediate" evidence="1">
    <location>
        <position position="67"/>
    </location>
</feature>
<name>GLPE_ALIFM</name>
<dbReference type="EC" id="2.8.1.1" evidence="1"/>
<dbReference type="EMBL" id="CP001139">
    <property type="protein sequence ID" value="ACH67356.1"/>
    <property type="molecule type" value="Genomic_DNA"/>
</dbReference>
<dbReference type="RefSeq" id="WP_012534374.1">
    <property type="nucleotide sequence ID" value="NC_011184.1"/>
</dbReference>
<dbReference type="SMR" id="B5FCB8"/>
<dbReference type="KEGG" id="vfm:VFMJ11_2572"/>
<dbReference type="HOGENOM" id="CLU_089574_14_0_6"/>
<dbReference type="Proteomes" id="UP000001857">
    <property type="component" value="Chromosome I"/>
</dbReference>
<dbReference type="GO" id="GO:0005737">
    <property type="term" value="C:cytoplasm"/>
    <property type="evidence" value="ECO:0007669"/>
    <property type="project" value="UniProtKB-SubCell"/>
</dbReference>
<dbReference type="GO" id="GO:0004792">
    <property type="term" value="F:thiosulfate-cyanide sulfurtransferase activity"/>
    <property type="evidence" value="ECO:0007669"/>
    <property type="project" value="UniProtKB-UniRule"/>
</dbReference>
<dbReference type="GO" id="GO:0006071">
    <property type="term" value="P:glycerol metabolic process"/>
    <property type="evidence" value="ECO:0007669"/>
    <property type="project" value="UniProtKB-UniRule"/>
</dbReference>
<dbReference type="CDD" id="cd01444">
    <property type="entry name" value="GlpE_ST"/>
    <property type="match status" value="1"/>
</dbReference>
<dbReference type="Gene3D" id="3.40.250.10">
    <property type="entry name" value="Rhodanese-like domain"/>
    <property type="match status" value="1"/>
</dbReference>
<dbReference type="HAMAP" id="MF_01009">
    <property type="entry name" value="Thiosulf_sulfurtr"/>
    <property type="match status" value="1"/>
</dbReference>
<dbReference type="InterPro" id="IPR050229">
    <property type="entry name" value="GlpE_sulfurtransferase"/>
</dbReference>
<dbReference type="InterPro" id="IPR001763">
    <property type="entry name" value="Rhodanese-like_dom"/>
</dbReference>
<dbReference type="InterPro" id="IPR036873">
    <property type="entry name" value="Rhodanese-like_dom_sf"/>
</dbReference>
<dbReference type="InterPro" id="IPR023695">
    <property type="entry name" value="Thiosulf_sulfurTrfase"/>
</dbReference>
<dbReference type="NCBIfam" id="NF001195">
    <property type="entry name" value="PRK00162.1"/>
    <property type="match status" value="1"/>
</dbReference>
<dbReference type="PANTHER" id="PTHR43031">
    <property type="entry name" value="FAD-DEPENDENT OXIDOREDUCTASE"/>
    <property type="match status" value="1"/>
</dbReference>
<dbReference type="PANTHER" id="PTHR43031:SF6">
    <property type="entry name" value="THIOSULFATE SULFURTRANSFERASE GLPE"/>
    <property type="match status" value="1"/>
</dbReference>
<dbReference type="Pfam" id="PF00581">
    <property type="entry name" value="Rhodanese"/>
    <property type="match status" value="1"/>
</dbReference>
<dbReference type="SMART" id="SM00450">
    <property type="entry name" value="RHOD"/>
    <property type="match status" value="1"/>
</dbReference>
<dbReference type="SUPFAM" id="SSF52821">
    <property type="entry name" value="Rhodanese/Cell cycle control phosphatase"/>
    <property type="match status" value="1"/>
</dbReference>
<dbReference type="PROSITE" id="PS50206">
    <property type="entry name" value="RHODANESE_3"/>
    <property type="match status" value="1"/>
</dbReference>
<reference key="1">
    <citation type="submission" date="2008-08" db="EMBL/GenBank/DDBJ databases">
        <title>Complete sequence of Vibrio fischeri strain MJ11.</title>
        <authorList>
            <person name="Mandel M.J."/>
            <person name="Stabb E.V."/>
            <person name="Ruby E.G."/>
            <person name="Ferriera S."/>
            <person name="Johnson J."/>
            <person name="Kravitz S."/>
            <person name="Beeson K."/>
            <person name="Sutton G."/>
            <person name="Rogers Y.-H."/>
            <person name="Friedman R."/>
            <person name="Frazier M."/>
            <person name="Venter J.C."/>
        </authorList>
    </citation>
    <scope>NUCLEOTIDE SEQUENCE [LARGE SCALE GENOMIC DNA]</scope>
    <source>
        <strain>MJ11</strain>
    </source>
</reference>
<keyword id="KW-0963">Cytoplasm</keyword>
<keyword id="KW-0808">Transferase</keyword>
<gene>
    <name evidence="1" type="primary">glpE</name>
    <name type="ordered locus">VFMJ11_2572</name>
</gene>
<comment type="function">
    <text evidence="1">Transferase that catalyzes the transfer of sulfur from thiosulfate to thiophilic acceptors such as cyanide or dithiols. May function in a CysM-independent thiosulfate assimilation pathway by catalyzing the conversion of thiosulfate to sulfite, which can then be used for L-cysteine biosynthesis.</text>
</comment>
<comment type="catalytic activity">
    <reaction evidence="1">
        <text>thiosulfate + hydrogen cyanide = thiocyanate + sulfite + 2 H(+)</text>
        <dbReference type="Rhea" id="RHEA:16881"/>
        <dbReference type="ChEBI" id="CHEBI:15378"/>
        <dbReference type="ChEBI" id="CHEBI:17359"/>
        <dbReference type="ChEBI" id="CHEBI:18022"/>
        <dbReference type="ChEBI" id="CHEBI:18407"/>
        <dbReference type="ChEBI" id="CHEBI:33542"/>
        <dbReference type="EC" id="2.8.1.1"/>
    </reaction>
</comment>
<comment type="catalytic activity">
    <reaction evidence="1">
        <text>thiosulfate + [thioredoxin]-dithiol = [thioredoxin]-disulfide + hydrogen sulfide + sulfite + 2 H(+)</text>
        <dbReference type="Rhea" id="RHEA:83859"/>
        <dbReference type="Rhea" id="RHEA-COMP:10698"/>
        <dbReference type="Rhea" id="RHEA-COMP:10700"/>
        <dbReference type="ChEBI" id="CHEBI:15378"/>
        <dbReference type="ChEBI" id="CHEBI:17359"/>
        <dbReference type="ChEBI" id="CHEBI:29919"/>
        <dbReference type="ChEBI" id="CHEBI:29950"/>
        <dbReference type="ChEBI" id="CHEBI:33542"/>
        <dbReference type="ChEBI" id="CHEBI:50058"/>
    </reaction>
</comment>
<comment type="subcellular location">
    <subcellularLocation>
        <location evidence="1">Cytoplasm</location>
    </subcellularLocation>
</comment>
<comment type="similarity">
    <text evidence="1">Belongs to the GlpE family.</text>
</comment>
<protein>
    <recommendedName>
        <fullName evidence="1">Thiosulfate sulfurtransferase GlpE</fullName>
        <ecNumber evidence="1">2.8.1.1</ecNumber>
    </recommendedName>
</protein>
<sequence>MDQFQHISVVDAQEKLKQQDLNAVLVDIRDPQSFIRGHVENAFHLTNDTIVELMNEVDFEQPVLVMCYHGHSSQGAAQYLVNQGYEEVYSVDGGFEGWHKAGLPVEK</sequence>
<organism>
    <name type="scientific">Aliivibrio fischeri (strain MJ11)</name>
    <name type="common">Vibrio fischeri</name>
    <dbReference type="NCBI Taxonomy" id="388396"/>
    <lineage>
        <taxon>Bacteria</taxon>
        <taxon>Pseudomonadati</taxon>
        <taxon>Pseudomonadota</taxon>
        <taxon>Gammaproteobacteria</taxon>
        <taxon>Vibrionales</taxon>
        <taxon>Vibrionaceae</taxon>
        <taxon>Aliivibrio</taxon>
    </lineage>
</organism>
<evidence type="ECO:0000255" key="1">
    <source>
        <dbReference type="HAMAP-Rule" id="MF_01009"/>
    </source>
</evidence>